<keyword id="KW-0456">Lyase</keyword>
<keyword id="KW-1185">Reference proteome</keyword>
<accession>Q837A4</accession>
<gene>
    <name evidence="1" type="primary">mgsA</name>
    <name type="ordered locus">EF_0939</name>
</gene>
<sequence>MKIALIAHDRKKTLMIKLATAYKHILEKHELYATGTTGMKVMEATGLPVHCFKSGPLGGDQQIGAMISEDNIDLVIFLRDPLSAQPHEPDVTALIRLSDVYEIPLATNIGSAEILLRGVEAGFADFREVIHEGDRRPLAF</sequence>
<evidence type="ECO:0000255" key="1">
    <source>
        <dbReference type="HAMAP-Rule" id="MF_00549"/>
    </source>
</evidence>
<comment type="function">
    <text evidence="1">Catalyzes the formation of methylglyoxal from dihydroxyacetone phosphate.</text>
</comment>
<comment type="catalytic activity">
    <reaction evidence="1">
        <text>dihydroxyacetone phosphate = methylglyoxal + phosphate</text>
        <dbReference type="Rhea" id="RHEA:17937"/>
        <dbReference type="ChEBI" id="CHEBI:17158"/>
        <dbReference type="ChEBI" id="CHEBI:43474"/>
        <dbReference type="ChEBI" id="CHEBI:57642"/>
        <dbReference type="EC" id="4.2.3.3"/>
    </reaction>
</comment>
<comment type="similarity">
    <text evidence="1">Belongs to the methylglyoxal synthase family.</text>
</comment>
<proteinExistence type="inferred from homology"/>
<protein>
    <recommendedName>
        <fullName evidence="1">Methylglyoxal synthase</fullName>
        <shortName evidence="1">MGS</shortName>
        <ecNumber evidence="1">4.2.3.3</ecNumber>
    </recommendedName>
</protein>
<reference key="1">
    <citation type="journal article" date="2003" name="Science">
        <title>Role of mobile DNA in the evolution of vancomycin-resistant Enterococcus faecalis.</title>
        <authorList>
            <person name="Paulsen I.T."/>
            <person name="Banerjei L."/>
            <person name="Myers G.S.A."/>
            <person name="Nelson K.E."/>
            <person name="Seshadri R."/>
            <person name="Read T.D."/>
            <person name="Fouts D.E."/>
            <person name="Eisen J.A."/>
            <person name="Gill S.R."/>
            <person name="Heidelberg J.F."/>
            <person name="Tettelin H."/>
            <person name="Dodson R.J."/>
            <person name="Umayam L.A."/>
            <person name="Brinkac L.M."/>
            <person name="Beanan M.J."/>
            <person name="Daugherty S.C."/>
            <person name="DeBoy R.T."/>
            <person name="Durkin S.A."/>
            <person name="Kolonay J.F."/>
            <person name="Madupu R."/>
            <person name="Nelson W.C."/>
            <person name="Vamathevan J.J."/>
            <person name="Tran B."/>
            <person name="Upton J."/>
            <person name="Hansen T."/>
            <person name="Shetty J."/>
            <person name="Khouri H.M."/>
            <person name="Utterback T.R."/>
            <person name="Radune D."/>
            <person name="Ketchum K.A."/>
            <person name="Dougherty B.A."/>
            <person name="Fraser C.M."/>
        </authorList>
    </citation>
    <scope>NUCLEOTIDE SEQUENCE [LARGE SCALE GENOMIC DNA]</scope>
    <source>
        <strain>ATCC 700802 / V583</strain>
    </source>
</reference>
<name>MGSA_ENTFA</name>
<dbReference type="EC" id="4.2.3.3" evidence="1"/>
<dbReference type="EMBL" id="AE016830">
    <property type="protein sequence ID" value="AAO80747.1"/>
    <property type="molecule type" value="Genomic_DNA"/>
</dbReference>
<dbReference type="RefSeq" id="NP_814677.1">
    <property type="nucleotide sequence ID" value="NC_004668.1"/>
</dbReference>
<dbReference type="RefSeq" id="WP_002355823.1">
    <property type="nucleotide sequence ID" value="NZ_KE136527.1"/>
</dbReference>
<dbReference type="SMR" id="Q837A4"/>
<dbReference type="STRING" id="226185.EF_0939"/>
<dbReference type="EnsemblBacteria" id="AAO80747">
    <property type="protein sequence ID" value="AAO80747"/>
    <property type="gene ID" value="EF_0939"/>
</dbReference>
<dbReference type="GeneID" id="60893275"/>
<dbReference type="KEGG" id="efa:EF0939"/>
<dbReference type="PATRIC" id="fig|226185.45.peg.3147"/>
<dbReference type="eggNOG" id="COG1803">
    <property type="taxonomic scope" value="Bacteria"/>
</dbReference>
<dbReference type="HOGENOM" id="CLU_120420_1_0_9"/>
<dbReference type="Proteomes" id="UP000001415">
    <property type="component" value="Chromosome"/>
</dbReference>
<dbReference type="GO" id="GO:0005829">
    <property type="term" value="C:cytosol"/>
    <property type="evidence" value="ECO:0007669"/>
    <property type="project" value="TreeGrafter"/>
</dbReference>
<dbReference type="GO" id="GO:0008929">
    <property type="term" value="F:methylglyoxal synthase activity"/>
    <property type="evidence" value="ECO:0007669"/>
    <property type="project" value="UniProtKB-UniRule"/>
</dbReference>
<dbReference type="GO" id="GO:0019242">
    <property type="term" value="P:methylglyoxal biosynthetic process"/>
    <property type="evidence" value="ECO:0007669"/>
    <property type="project" value="UniProtKB-UniRule"/>
</dbReference>
<dbReference type="CDD" id="cd01422">
    <property type="entry name" value="MGS"/>
    <property type="match status" value="1"/>
</dbReference>
<dbReference type="FunFam" id="3.40.50.1380:FF:000006">
    <property type="entry name" value="Methylglyoxal synthase"/>
    <property type="match status" value="1"/>
</dbReference>
<dbReference type="Gene3D" id="3.40.50.1380">
    <property type="entry name" value="Methylglyoxal synthase-like domain"/>
    <property type="match status" value="1"/>
</dbReference>
<dbReference type="HAMAP" id="MF_00549">
    <property type="entry name" value="Methylglyoxal_synth"/>
    <property type="match status" value="1"/>
</dbReference>
<dbReference type="InterPro" id="IPR004363">
    <property type="entry name" value="Methylgl_synth"/>
</dbReference>
<dbReference type="InterPro" id="IPR018148">
    <property type="entry name" value="Methylglyoxal_synth_AS"/>
</dbReference>
<dbReference type="InterPro" id="IPR011607">
    <property type="entry name" value="MGS-like_dom"/>
</dbReference>
<dbReference type="InterPro" id="IPR036914">
    <property type="entry name" value="MGS-like_dom_sf"/>
</dbReference>
<dbReference type="NCBIfam" id="TIGR00160">
    <property type="entry name" value="MGSA"/>
    <property type="match status" value="1"/>
</dbReference>
<dbReference type="NCBIfam" id="NF003559">
    <property type="entry name" value="PRK05234.1"/>
    <property type="match status" value="1"/>
</dbReference>
<dbReference type="PANTHER" id="PTHR30492">
    <property type="entry name" value="METHYLGLYOXAL SYNTHASE"/>
    <property type="match status" value="1"/>
</dbReference>
<dbReference type="PANTHER" id="PTHR30492:SF0">
    <property type="entry name" value="METHYLGLYOXAL SYNTHASE"/>
    <property type="match status" value="1"/>
</dbReference>
<dbReference type="Pfam" id="PF02142">
    <property type="entry name" value="MGS"/>
    <property type="match status" value="1"/>
</dbReference>
<dbReference type="PIRSF" id="PIRSF006614">
    <property type="entry name" value="Methylglyox_syn"/>
    <property type="match status" value="1"/>
</dbReference>
<dbReference type="SMART" id="SM00851">
    <property type="entry name" value="MGS"/>
    <property type="match status" value="1"/>
</dbReference>
<dbReference type="SUPFAM" id="SSF52335">
    <property type="entry name" value="Methylglyoxal synthase-like"/>
    <property type="match status" value="1"/>
</dbReference>
<dbReference type="PROSITE" id="PS01335">
    <property type="entry name" value="METHYLGLYOXAL_SYNTH"/>
    <property type="match status" value="1"/>
</dbReference>
<dbReference type="PROSITE" id="PS51855">
    <property type="entry name" value="MGS"/>
    <property type="match status" value="1"/>
</dbReference>
<organism>
    <name type="scientific">Enterococcus faecalis (strain ATCC 700802 / V583)</name>
    <dbReference type="NCBI Taxonomy" id="226185"/>
    <lineage>
        <taxon>Bacteria</taxon>
        <taxon>Bacillati</taxon>
        <taxon>Bacillota</taxon>
        <taxon>Bacilli</taxon>
        <taxon>Lactobacillales</taxon>
        <taxon>Enterococcaceae</taxon>
        <taxon>Enterococcus</taxon>
    </lineage>
</organism>
<feature type="chain" id="PRO_0000178628" description="Methylglyoxal synthase">
    <location>
        <begin position="1"/>
        <end position="140"/>
    </location>
</feature>
<feature type="domain" description="MGS-like" evidence="1">
    <location>
        <begin position="1"/>
        <end position="140"/>
    </location>
</feature>
<feature type="active site" description="Proton donor/acceptor" evidence="1">
    <location>
        <position position="60"/>
    </location>
</feature>
<feature type="binding site" evidence="1">
    <location>
        <position position="8"/>
    </location>
    <ligand>
        <name>substrate</name>
    </ligand>
</feature>
<feature type="binding site" evidence="1">
    <location>
        <position position="12"/>
    </location>
    <ligand>
        <name>substrate</name>
    </ligand>
</feature>
<feature type="binding site" evidence="1">
    <location>
        <begin position="34"/>
        <end position="37"/>
    </location>
    <ligand>
        <name>substrate</name>
    </ligand>
</feature>
<feature type="binding site" evidence="1">
    <location>
        <begin position="54"/>
        <end position="55"/>
    </location>
    <ligand>
        <name>substrate</name>
    </ligand>
</feature>
<feature type="binding site" evidence="1">
    <location>
        <position position="87"/>
    </location>
    <ligand>
        <name>substrate</name>
    </ligand>
</feature>